<reference key="1">
    <citation type="journal article" date="2000" name="Nature">
        <title>Sequence and analysis of chromosome 1 of the plant Arabidopsis thaliana.</title>
        <authorList>
            <person name="Theologis A."/>
            <person name="Ecker J.R."/>
            <person name="Palm C.J."/>
            <person name="Federspiel N.A."/>
            <person name="Kaul S."/>
            <person name="White O."/>
            <person name="Alonso J."/>
            <person name="Altafi H."/>
            <person name="Araujo R."/>
            <person name="Bowman C.L."/>
            <person name="Brooks S.Y."/>
            <person name="Buehler E."/>
            <person name="Chan A."/>
            <person name="Chao Q."/>
            <person name="Chen H."/>
            <person name="Cheuk R.F."/>
            <person name="Chin C.W."/>
            <person name="Chung M.K."/>
            <person name="Conn L."/>
            <person name="Conway A.B."/>
            <person name="Conway A.R."/>
            <person name="Creasy T.H."/>
            <person name="Dewar K."/>
            <person name="Dunn P."/>
            <person name="Etgu P."/>
            <person name="Feldblyum T.V."/>
            <person name="Feng J.-D."/>
            <person name="Fong B."/>
            <person name="Fujii C.Y."/>
            <person name="Gill J.E."/>
            <person name="Goldsmith A.D."/>
            <person name="Haas B."/>
            <person name="Hansen N.F."/>
            <person name="Hughes B."/>
            <person name="Huizar L."/>
            <person name="Hunter J.L."/>
            <person name="Jenkins J."/>
            <person name="Johnson-Hopson C."/>
            <person name="Khan S."/>
            <person name="Khaykin E."/>
            <person name="Kim C.J."/>
            <person name="Koo H.L."/>
            <person name="Kremenetskaia I."/>
            <person name="Kurtz D.B."/>
            <person name="Kwan A."/>
            <person name="Lam B."/>
            <person name="Langin-Hooper S."/>
            <person name="Lee A."/>
            <person name="Lee J.M."/>
            <person name="Lenz C.A."/>
            <person name="Li J.H."/>
            <person name="Li Y.-P."/>
            <person name="Lin X."/>
            <person name="Liu S.X."/>
            <person name="Liu Z.A."/>
            <person name="Luros J.S."/>
            <person name="Maiti R."/>
            <person name="Marziali A."/>
            <person name="Militscher J."/>
            <person name="Miranda M."/>
            <person name="Nguyen M."/>
            <person name="Nierman W.C."/>
            <person name="Osborne B.I."/>
            <person name="Pai G."/>
            <person name="Peterson J."/>
            <person name="Pham P.K."/>
            <person name="Rizzo M."/>
            <person name="Rooney T."/>
            <person name="Rowley D."/>
            <person name="Sakano H."/>
            <person name="Salzberg S.L."/>
            <person name="Schwartz J.R."/>
            <person name="Shinn P."/>
            <person name="Southwick A.M."/>
            <person name="Sun H."/>
            <person name="Tallon L.J."/>
            <person name="Tambunga G."/>
            <person name="Toriumi M.J."/>
            <person name="Town C.D."/>
            <person name="Utterback T."/>
            <person name="Van Aken S."/>
            <person name="Vaysberg M."/>
            <person name="Vysotskaia V.S."/>
            <person name="Walker M."/>
            <person name="Wu D."/>
            <person name="Yu G."/>
            <person name="Fraser C.M."/>
            <person name="Venter J.C."/>
            <person name="Davis R.W."/>
        </authorList>
    </citation>
    <scope>NUCLEOTIDE SEQUENCE [LARGE SCALE GENOMIC DNA]</scope>
    <source>
        <strain>cv. Columbia</strain>
    </source>
</reference>
<reference key="2">
    <citation type="journal article" date="2017" name="Plant J.">
        <title>Araport11: a complete reannotation of the Arabidopsis thaliana reference genome.</title>
        <authorList>
            <person name="Cheng C.Y."/>
            <person name="Krishnakumar V."/>
            <person name="Chan A.P."/>
            <person name="Thibaud-Nissen F."/>
            <person name="Schobel S."/>
            <person name="Town C.D."/>
        </authorList>
    </citation>
    <scope>GENOME REANNOTATION</scope>
    <source>
        <strain>cv. Columbia</strain>
    </source>
</reference>
<reference key="3">
    <citation type="journal article" date="2003" name="Science">
        <title>Empirical analysis of transcriptional activity in the Arabidopsis genome.</title>
        <authorList>
            <person name="Yamada K."/>
            <person name="Lim J."/>
            <person name="Dale J.M."/>
            <person name="Chen H."/>
            <person name="Shinn P."/>
            <person name="Palm C.J."/>
            <person name="Southwick A.M."/>
            <person name="Wu H.C."/>
            <person name="Kim C.J."/>
            <person name="Nguyen M."/>
            <person name="Pham P.K."/>
            <person name="Cheuk R.F."/>
            <person name="Karlin-Newmann G."/>
            <person name="Liu S.X."/>
            <person name="Lam B."/>
            <person name="Sakano H."/>
            <person name="Wu T."/>
            <person name="Yu G."/>
            <person name="Miranda M."/>
            <person name="Quach H.L."/>
            <person name="Tripp M."/>
            <person name="Chang C.H."/>
            <person name="Lee J.M."/>
            <person name="Toriumi M.J."/>
            <person name="Chan M.M."/>
            <person name="Tang C.C."/>
            <person name="Onodera C.S."/>
            <person name="Deng J.M."/>
            <person name="Akiyama K."/>
            <person name="Ansari Y."/>
            <person name="Arakawa T."/>
            <person name="Banh J."/>
            <person name="Banno F."/>
            <person name="Bowser L."/>
            <person name="Brooks S.Y."/>
            <person name="Carninci P."/>
            <person name="Chao Q."/>
            <person name="Choy N."/>
            <person name="Enju A."/>
            <person name="Goldsmith A.D."/>
            <person name="Gurjal M."/>
            <person name="Hansen N.F."/>
            <person name="Hayashizaki Y."/>
            <person name="Johnson-Hopson C."/>
            <person name="Hsuan V.W."/>
            <person name="Iida K."/>
            <person name="Karnes M."/>
            <person name="Khan S."/>
            <person name="Koesema E."/>
            <person name="Ishida J."/>
            <person name="Jiang P.X."/>
            <person name="Jones T."/>
            <person name="Kawai J."/>
            <person name="Kamiya A."/>
            <person name="Meyers C."/>
            <person name="Nakajima M."/>
            <person name="Narusaka M."/>
            <person name="Seki M."/>
            <person name="Sakurai T."/>
            <person name="Satou M."/>
            <person name="Tamse R."/>
            <person name="Vaysberg M."/>
            <person name="Wallender E.K."/>
            <person name="Wong C."/>
            <person name="Yamamura Y."/>
            <person name="Yuan S."/>
            <person name="Shinozaki K."/>
            <person name="Davis R.W."/>
            <person name="Theologis A."/>
            <person name="Ecker J.R."/>
        </authorList>
    </citation>
    <scope>NUCLEOTIDE SEQUENCE [LARGE SCALE MRNA]</scope>
    <source>
        <strain>cv. Columbia</strain>
    </source>
</reference>
<reference key="4">
    <citation type="submission" date="2002-03" db="EMBL/GenBank/DDBJ databases">
        <title>Full-length cDNA from Arabidopsis thaliana.</title>
        <authorList>
            <person name="Brover V.V."/>
            <person name="Troukhan M.E."/>
            <person name="Alexandrov N.A."/>
            <person name="Lu Y.-P."/>
            <person name="Flavell R.B."/>
            <person name="Feldmann K.A."/>
        </authorList>
    </citation>
    <scope>NUCLEOTIDE SEQUENCE [LARGE SCALE MRNA]</scope>
</reference>
<reference key="5">
    <citation type="journal article" date="2001" name="Plant Physiol.">
        <title>The organization of cytoplasmic ribosomal protein genes in the Arabidopsis genome.</title>
        <authorList>
            <person name="Barakat A."/>
            <person name="Szick-Miranda K."/>
            <person name="Chang I.-F."/>
            <person name="Guyot R."/>
            <person name="Blanc G."/>
            <person name="Cooke R."/>
            <person name="Delseny M."/>
            <person name="Bailey-Serres J."/>
        </authorList>
    </citation>
    <scope>GENE FAMILY ORGANIZATION</scope>
    <scope>NOMENCLATURE</scope>
</reference>
<reference key="6">
    <citation type="journal article" date="2023" name="Plant Cell">
        <title>An updated nomenclature for plant ribosomal protein genes.</title>
        <authorList>
            <person name="Scarpin M.R."/>
            <person name="Busche M."/>
            <person name="Martinez R.E."/>
            <person name="Harper L.C."/>
            <person name="Reiser L."/>
            <person name="Szakonyi D."/>
            <person name="Merchante C."/>
            <person name="Lan T."/>
            <person name="Xiong W."/>
            <person name="Mo B."/>
            <person name="Tang G."/>
            <person name="Chen X."/>
            <person name="Bailey-Serres J."/>
            <person name="Browning K.S."/>
            <person name="Brunkard J.O."/>
        </authorList>
    </citation>
    <scope>NOMENCLATURE</scope>
</reference>
<feature type="chain" id="PRO_0000245492" description="Large ribosomal subunit protein eL33y">
    <location>
        <begin position="1"/>
        <end position="112"/>
    </location>
</feature>
<accession>Q9C912</accession>
<organism>
    <name type="scientific">Arabidopsis thaliana</name>
    <name type="common">Mouse-ear cress</name>
    <dbReference type="NCBI Taxonomy" id="3702"/>
    <lineage>
        <taxon>Eukaryota</taxon>
        <taxon>Viridiplantae</taxon>
        <taxon>Streptophyta</taxon>
        <taxon>Embryophyta</taxon>
        <taxon>Tracheophyta</taxon>
        <taxon>Spermatophyta</taxon>
        <taxon>Magnoliopsida</taxon>
        <taxon>eudicotyledons</taxon>
        <taxon>Gunneridae</taxon>
        <taxon>Pentapetalae</taxon>
        <taxon>rosids</taxon>
        <taxon>malvids</taxon>
        <taxon>Brassicales</taxon>
        <taxon>Brassicaceae</taxon>
        <taxon>Camelineae</taxon>
        <taxon>Arabidopsis</taxon>
    </lineage>
</organism>
<proteinExistence type="inferred from homology"/>
<name>R35A3_ARATH</name>
<sequence length="112" mass="12916">MVKGRQGERVRLYVRGTILGYKRSKSNQYPNTSLVQIEGVNTQEEVNWYKGKRMAYIYKAKTKKNGSHYRCIWGKVTRPHGNSGVVRAKFTSNLPPKSMGSRVRVFMYPSNI</sequence>
<evidence type="ECO:0000303" key="1">
    <source>
    </source>
</evidence>
<evidence type="ECO:0000305" key="2"/>
<dbReference type="EMBL" id="AC020579">
    <property type="protein sequence ID" value="AAG52401.1"/>
    <property type="molecule type" value="Genomic_DNA"/>
</dbReference>
<dbReference type="EMBL" id="CP002684">
    <property type="protein sequence ID" value="AEE35572.1"/>
    <property type="molecule type" value="Genomic_DNA"/>
</dbReference>
<dbReference type="EMBL" id="AF370320">
    <property type="protein sequence ID" value="AAK44135.1"/>
    <property type="molecule type" value="mRNA"/>
</dbReference>
<dbReference type="EMBL" id="AY063108">
    <property type="protein sequence ID" value="AAL34282.1"/>
    <property type="molecule type" value="mRNA"/>
</dbReference>
<dbReference type="EMBL" id="AY085956">
    <property type="protein sequence ID" value="AAM63166.1"/>
    <property type="molecule type" value="mRNA"/>
</dbReference>
<dbReference type="PIR" id="B96771">
    <property type="entry name" value="B96771"/>
</dbReference>
<dbReference type="RefSeq" id="NP_177567.1">
    <property type="nucleotide sequence ID" value="NM_106087.5"/>
</dbReference>
<dbReference type="SMR" id="Q9C912"/>
<dbReference type="BioGRID" id="28986">
    <property type="interactions" value="133"/>
</dbReference>
<dbReference type="FunCoup" id="Q9C912">
    <property type="interactions" value="2623"/>
</dbReference>
<dbReference type="STRING" id="3702.Q9C912"/>
<dbReference type="PaxDb" id="3702-AT1G74270.1"/>
<dbReference type="EnsemblPlants" id="AT1G74270.1">
    <property type="protein sequence ID" value="AT1G74270.1"/>
    <property type="gene ID" value="AT1G74270"/>
</dbReference>
<dbReference type="GeneID" id="843767"/>
<dbReference type="Gramene" id="AT1G74270.1">
    <property type="protein sequence ID" value="AT1G74270.1"/>
    <property type="gene ID" value="AT1G74270"/>
</dbReference>
<dbReference type="KEGG" id="ath:AT1G74270"/>
<dbReference type="Araport" id="AT1G74270"/>
<dbReference type="TAIR" id="AT1G74270"/>
<dbReference type="eggNOG" id="KOG0887">
    <property type="taxonomic scope" value="Eukaryota"/>
</dbReference>
<dbReference type="HOGENOM" id="CLU_100745_2_0_1"/>
<dbReference type="InParanoid" id="Q9C912"/>
<dbReference type="OMA" id="YRTNKHH"/>
<dbReference type="OrthoDB" id="1024826at2759"/>
<dbReference type="PhylomeDB" id="Q9C912"/>
<dbReference type="PRO" id="PR:Q9C912"/>
<dbReference type="Proteomes" id="UP000006548">
    <property type="component" value="Chromosome 1"/>
</dbReference>
<dbReference type="ExpressionAtlas" id="Q9C912">
    <property type="expression patterns" value="baseline and differential"/>
</dbReference>
<dbReference type="GO" id="GO:0022625">
    <property type="term" value="C:cytosolic large ribosomal subunit"/>
    <property type="evidence" value="ECO:0007005"/>
    <property type="project" value="TAIR"/>
</dbReference>
<dbReference type="GO" id="GO:0005739">
    <property type="term" value="C:mitochondrion"/>
    <property type="evidence" value="ECO:0007005"/>
    <property type="project" value="TAIR"/>
</dbReference>
<dbReference type="GO" id="GO:0003729">
    <property type="term" value="F:mRNA binding"/>
    <property type="evidence" value="ECO:0000314"/>
    <property type="project" value="TAIR"/>
</dbReference>
<dbReference type="GO" id="GO:0003735">
    <property type="term" value="F:structural constituent of ribosome"/>
    <property type="evidence" value="ECO:0000314"/>
    <property type="project" value="CAFA"/>
</dbReference>
<dbReference type="GO" id="GO:0006412">
    <property type="term" value="P:translation"/>
    <property type="evidence" value="ECO:0007669"/>
    <property type="project" value="InterPro"/>
</dbReference>
<dbReference type="FunFam" id="2.40.10.190:FF:000001">
    <property type="entry name" value="60S ribosomal protein L35a"/>
    <property type="match status" value="1"/>
</dbReference>
<dbReference type="Gene3D" id="2.40.10.190">
    <property type="entry name" value="translation elongation factor selb, chain A, domain 4"/>
    <property type="match status" value="1"/>
</dbReference>
<dbReference type="HAMAP" id="MF_00573">
    <property type="entry name" value="Ribosomal_eL33"/>
    <property type="match status" value="1"/>
</dbReference>
<dbReference type="InterPro" id="IPR001780">
    <property type="entry name" value="Ribosomal_eL33"/>
</dbReference>
<dbReference type="InterPro" id="IPR018266">
    <property type="entry name" value="Ribosomal_eL33_CS"/>
</dbReference>
<dbReference type="InterPro" id="IPR038661">
    <property type="entry name" value="Ribosomal_eL33_sf"/>
</dbReference>
<dbReference type="InterPro" id="IPR009000">
    <property type="entry name" value="Transl_B-barrel_sf"/>
</dbReference>
<dbReference type="PANTHER" id="PTHR10902">
    <property type="entry name" value="60S RIBOSOMAL PROTEIN L35A"/>
    <property type="match status" value="1"/>
</dbReference>
<dbReference type="Pfam" id="PF01247">
    <property type="entry name" value="Ribosomal_L35Ae"/>
    <property type="match status" value="1"/>
</dbReference>
<dbReference type="SUPFAM" id="SSF50447">
    <property type="entry name" value="Translation proteins"/>
    <property type="match status" value="1"/>
</dbReference>
<dbReference type="PROSITE" id="PS01105">
    <property type="entry name" value="RIBOSOMAL_L35AE"/>
    <property type="match status" value="1"/>
</dbReference>
<gene>
    <name type="primary">RPL35AC</name>
    <name type="ordered locus">At1g74270</name>
    <name type="ORF">F1O17.6</name>
</gene>
<keyword id="KW-1185">Reference proteome</keyword>
<keyword id="KW-0687">Ribonucleoprotein</keyword>
<keyword id="KW-0689">Ribosomal protein</keyword>
<comment type="similarity">
    <text evidence="2">Belongs to the eukaryotic ribosomal protein eL33 family.</text>
</comment>
<protein>
    <recommendedName>
        <fullName evidence="1">Large ribosomal subunit protein eL33y</fullName>
    </recommendedName>
    <alternativeName>
        <fullName>60S ribosomal protein L35a-3</fullName>
    </alternativeName>
</protein>